<organism>
    <name type="scientific">Corynebacterium diphtheriae (strain ATCC 700971 / NCTC 13129 / Biotype gravis)</name>
    <dbReference type="NCBI Taxonomy" id="257309"/>
    <lineage>
        <taxon>Bacteria</taxon>
        <taxon>Bacillati</taxon>
        <taxon>Actinomycetota</taxon>
        <taxon>Actinomycetes</taxon>
        <taxon>Mycobacteriales</taxon>
        <taxon>Corynebacteriaceae</taxon>
        <taxon>Corynebacterium</taxon>
    </lineage>
</organism>
<gene>
    <name evidence="1" type="primary">trpD</name>
    <name type="ordered locus">DIP2354</name>
</gene>
<proteinExistence type="inferred from homology"/>
<reference key="1">
    <citation type="journal article" date="2003" name="Nucleic Acids Res.">
        <title>The complete genome sequence and analysis of Corynebacterium diphtheriae NCTC13129.</title>
        <authorList>
            <person name="Cerdeno-Tarraga A.-M."/>
            <person name="Efstratiou A."/>
            <person name="Dover L.G."/>
            <person name="Holden M.T.G."/>
            <person name="Pallen M.J."/>
            <person name="Bentley S.D."/>
            <person name="Besra G.S."/>
            <person name="Churcher C.M."/>
            <person name="James K.D."/>
            <person name="De Zoysa A."/>
            <person name="Chillingworth T."/>
            <person name="Cronin A."/>
            <person name="Dowd L."/>
            <person name="Feltwell T."/>
            <person name="Hamlin N."/>
            <person name="Holroyd S."/>
            <person name="Jagels K."/>
            <person name="Moule S."/>
            <person name="Quail M.A."/>
            <person name="Rabbinowitsch E."/>
            <person name="Rutherford K.M."/>
            <person name="Thomson N.R."/>
            <person name="Unwin L."/>
            <person name="Whitehead S."/>
            <person name="Barrell B.G."/>
            <person name="Parkhill J."/>
        </authorList>
    </citation>
    <scope>NUCLEOTIDE SEQUENCE [LARGE SCALE GENOMIC DNA]</scope>
    <source>
        <strain>ATCC 700971 / NCTC 13129 / Biotype gravis</strain>
    </source>
</reference>
<comment type="function">
    <text evidence="1">Catalyzes the transfer of the phosphoribosyl group of 5-phosphorylribose-1-pyrophosphate (PRPP) to anthranilate to yield N-(5'-phosphoribosyl)-anthranilate (PRA).</text>
</comment>
<comment type="catalytic activity">
    <reaction evidence="1">
        <text>N-(5-phospho-beta-D-ribosyl)anthranilate + diphosphate = 5-phospho-alpha-D-ribose 1-diphosphate + anthranilate</text>
        <dbReference type="Rhea" id="RHEA:11768"/>
        <dbReference type="ChEBI" id="CHEBI:16567"/>
        <dbReference type="ChEBI" id="CHEBI:18277"/>
        <dbReference type="ChEBI" id="CHEBI:33019"/>
        <dbReference type="ChEBI" id="CHEBI:58017"/>
        <dbReference type="EC" id="2.4.2.18"/>
    </reaction>
</comment>
<comment type="cofactor">
    <cofactor evidence="1">
        <name>Mg(2+)</name>
        <dbReference type="ChEBI" id="CHEBI:18420"/>
    </cofactor>
    <text evidence="1">Binds 2 magnesium ions per monomer.</text>
</comment>
<comment type="pathway">
    <text evidence="1">Amino-acid biosynthesis; L-tryptophan biosynthesis; L-tryptophan from chorismate: step 2/5.</text>
</comment>
<comment type="subunit">
    <text evidence="1">Homodimer.</text>
</comment>
<comment type="similarity">
    <text evidence="1">Belongs to the anthranilate phosphoribosyltransferase family.</text>
</comment>
<dbReference type="EC" id="2.4.2.18" evidence="1"/>
<dbReference type="EMBL" id="BX248361">
    <property type="protein sequence ID" value="CAE50877.1"/>
    <property type="molecule type" value="Genomic_DNA"/>
</dbReference>
<dbReference type="RefSeq" id="WP_010935786.1">
    <property type="nucleotide sequence ID" value="NC_002935.2"/>
</dbReference>
<dbReference type="SMR" id="Q6NEC1"/>
<dbReference type="STRING" id="257309.DIP2354"/>
<dbReference type="KEGG" id="cdi:DIP2354"/>
<dbReference type="HOGENOM" id="CLU_034315_2_1_11"/>
<dbReference type="UniPathway" id="UPA00035">
    <property type="reaction ID" value="UER00041"/>
</dbReference>
<dbReference type="Proteomes" id="UP000002198">
    <property type="component" value="Chromosome"/>
</dbReference>
<dbReference type="GO" id="GO:0005829">
    <property type="term" value="C:cytosol"/>
    <property type="evidence" value="ECO:0007669"/>
    <property type="project" value="TreeGrafter"/>
</dbReference>
<dbReference type="GO" id="GO:0004048">
    <property type="term" value="F:anthranilate phosphoribosyltransferase activity"/>
    <property type="evidence" value="ECO:0007669"/>
    <property type="project" value="UniProtKB-UniRule"/>
</dbReference>
<dbReference type="GO" id="GO:0000287">
    <property type="term" value="F:magnesium ion binding"/>
    <property type="evidence" value="ECO:0007669"/>
    <property type="project" value="UniProtKB-UniRule"/>
</dbReference>
<dbReference type="GO" id="GO:0000162">
    <property type="term" value="P:L-tryptophan biosynthetic process"/>
    <property type="evidence" value="ECO:0007669"/>
    <property type="project" value="UniProtKB-UniRule"/>
</dbReference>
<dbReference type="FunFam" id="3.40.1030.10:FF:000002">
    <property type="entry name" value="Anthranilate phosphoribosyltransferase"/>
    <property type="match status" value="1"/>
</dbReference>
<dbReference type="Gene3D" id="3.40.1030.10">
    <property type="entry name" value="Nucleoside phosphorylase/phosphoribosyltransferase catalytic domain"/>
    <property type="match status" value="1"/>
</dbReference>
<dbReference type="Gene3D" id="1.20.970.10">
    <property type="entry name" value="Transferase, Pyrimidine Nucleoside Phosphorylase, Chain C"/>
    <property type="match status" value="1"/>
</dbReference>
<dbReference type="HAMAP" id="MF_00211">
    <property type="entry name" value="TrpD"/>
    <property type="match status" value="1"/>
</dbReference>
<dbReference type="InterPro" id="IPR005940">
    <property type="entry name" value="Anthranilate_Pribosyl_Tfrase"/>
</dbReference>
<dbReference type="InterPro" id="IPR000312">
    <property type="entry name" value="Glycosyl_Trfase_fam3"/>
</dbReference>
<dbReference type="InterPro" id="IPR017459">
    <property type="entry name" value="Glycosyl_Trfase_fam3_N_dom"/>
</dbReference>
<dbReference type="InterPro" id="IPR036320">
    <property type="entry name" value="Glycosyl_Trfase_fam3_N_dom_sf"/>
</dbReference>
<dbReference type="InterPro" id="IPR035902">
    <property type="entry name" value="Nuc_phospho_transferase"/>
</dbReference>
<dbReference type="NCBIfam" id="TIGR01245">
    <property type="entry name" value="trpD"/>
    <property type="match status" value="1"/>
</dbReference>
<dbReference type="PANTHER" id="PTHR43285">
    <property type="entry name" value="ANTHRANILATE PHOSPHORIBOSYLTRANSFERASE"/>
    <property type="match status" value="1"/>
</dbReference>
<dbReference type="PANTHER" id="PTHR43285:SF2">
    <property type="entry name" value="ANTHRANILATE PHOSPHORIBOSYLTRANSFERASE"/>
    <property type="match status" value="1"/>
</dbReference>
<dbReference type="Pfam" id="PF02885">
    <property type="entry name" value="Glycos_trans_3N"/>
    <property type="match status" value="1"/>
</dbReference>
<dbReference type="Pfam" id="PF00591">
    <property type="entry name" value="Glycos_transf_3"/>
    <property type="match status" value="1"/>
</dbReference>
<dbReference type="SUPFAM" id="SSF52418">
    <property type="entry name" value="Nucleoside phosphorylase/phosphoribosyltransferase catalytic domain"/>
    <property type="match status" value="1"/>
</dbReference>
<dbReference type="SUPFAM" id="SSF47648">
    <property type="entry name" value="Nucleoside phosphorylase/phosphoribosyltransferase N-terminal domain"/>
    <property type="match status" value="1"/>
</dbReference>
<sequence length="341" mass="35928">MTSDKTLNNLIAYLDNPHPTVEQAIEVFTPLTVGDYDDVHIAALLATIRTRGETYADIAGAAKAFLAAGRPFPITGAGLMDSAGTGGDGANTINVTTAASLVAAAGGVKMVKCGNRSVSSKSGSADVLEALNIPLDLNPDRAVRQFNASNFTFLFAPAYNPAVAHVQPVRKALKVPTLFNTLGPILAPARPEFQVMGVANPKLGQIIAEVFRELGRSHALVVHGSGTDEIAVHGPTTVWELRDGEISTYTITPEEIGINRYELSELAGGDGVENAHLMRETFASRGPAAHRDAISATAGAMFYTANHVPTIAEGVAKAQTMLADGSVERWLAIHEEANYAE</sequence>
<keyword id="KW-0028">Amino-acid biosynthesis</keyword>
<keyword id="KW-0057">Aromatic amino acid biosynthesis</keyword>
<keyword id="KW-0328">Glycosyltransferase</keyword>
<keyword id="KW-0460">Magnesium</keyword>
<keyword id="KW-0479">Metal-binding</keyword>
<keyword id="KW-1185">Reference proteome</keyword>
<keyword id="KW-0808">Transferase</keyword>
<keyword id="KW-0822">Tryptophan biosynthesis</keyword>
<feature type="chain" id="PRO_0000227149" description="Anthranilate phosphoribosyltransferase">
    <location>
        <begin position="1"/>
        <end position="341"/>
    </location>
</feature>
<feature type="binding site" evidence="1">
    <location>
        <position position="84"/>
    </location>
    <ligand>
        <name>5-phospho-alpha-D-ribose 1-diphosphate</name>
        <dbReference type="ChEBI" id="CHEBI:58017"/>
    </ligand>
</feature>
<feature type="binding site" evidence="1">
    <location>
        <position position="84"/>
    </location>
    <ligand>
        <name>anthranilate</name>
        <dbReference type="ChEBI" id="CHEBI:16567"/>
        <label>1</label>
    </ligand>
</feature>
<feature type="binding site" evidence="1">
    <location>
        <begin position="87"/>
        <end position="88"/>
    </location>
    <ligand>
        <name>5-phospho-alpha-D-ribose 1-diphosphate</name>
        <dbReference type="ChEBI" id="CHEBI:58017"/>
    </ligand>
</feature>
<feature type="binding site" evidence="1">
    <location>
        <position position="92"/>
    </location>
    <ligand>
        <name>5-phospho-alpha-D-ribose 1-diphosphate</name>
        <dbReference type="ChEBI" id="CHEBI:58017"/>
    </ligand>
</feature>
<feature type="binding site" evidence="1">
    <location>
        <begin position="94"/>
        <end position="97"/>
    </location>
    <ligand>
        <name>5-phospho-alpha-D-ribose 1-diphosphate</name>
        <dbReference type="ChEBI" id="CHEBI:58017"/>
    </ligand>
</feature>
<feature type="binding site" evidence="1">
    <location>
        <position position="96"/>
    </location>
    <ligand>
        <name>Mg(2+)</name>
        <dbReference type="ChEBI" id="CHEBI:18420"/>
        <label>1</label>
    </ligand>
</feature>
<feature type="binding site" evidence="1">
    <location>
        <begin position="112"/>
        <end position="120"/>
    </location>
    <ligand>
        <name>5-phospho-alpha-D-ribose 1-diphosphate</name>
        <dbReference type="ChEBI" id="CHEBI:58017"/>
    </ligand>
</feature>
<feature type="binding site" evidence="1">
    <location>
        <position position="115"/>
    </location>
    <ligand>
        <name>anthranilate</name>
        <dbReference type="ChEBI" id="CHEBI:16567"/>
        <label>1</label>
    </ligand>
</feature>
<feature type="binding site" evidence="1">
    <location>
        <position position="124"/>
    </location>
    <ligand>
        <name>5-phospho-alpha-D-ribose 1-diphosphate</name>
        <dbReference type="ChEBI" id="CHEBI:58017"/>
    </ligand>
</feature>
<feature type="binding site" evidence="1">
    <location>
        <position position="170"/>
    </location>
    <ligand>
        <name>anthranilate</name>
        <dbReference type="ChEBI" id="CHEBI:16567"/>
        <label>2</label>
    </ligand>
</feature>
<feature type="binding site" evidence="1">
    <location>
        <position position="228"/>
    </location>
    <ligand>
        <name>Mg(2+)</name>
        <dbReference type="ChEBI" id="CHEBI:18420"/>
        <label>2</label>
    </ligand>
</feature>
<feature type="binding site" evidence="1">
    <location>
        <position position="229"/>
    </location>
    <ligand>
        <name>Mg(2+)</name>
        <dbReference type="ChEBI" id="CHEBI:18420"/>
        <label>1</label>
    </ligand>
</feature>
<feature type="binding site" evidence="1">
    <location>
        <position position="229"/>
    </location>
    <ligand>
        <name>Mg(2+)</name>
        <dbReference type="ChEBI" id="CHEBI:18420"/>
        <label>2</label>
    </ligand>
</feature>
<protein>
    <recommendedName>
        <fullName evidence="1">Anthranilate phosphoribosyltransferase</fullName>
        <ecNumber evidence="1">2.4.2.18</ecNumber>
    </recommendedName>
</protein>
<evidence type="ECO:0000255" key="1">
    <source>
        <dbReference type="HAMAP-Rule" id="MF_00211"/>
    </source>
</evidence>
<accession>Q6NEC1</accession>
<name>TRPD_CORDI</name>